<organism>
    <name type="scientific">Pan troglodytes</name>
    <name type="common">Chimpanzee</name>
    <dbReference type="NCBI Taxonomy" id="9598"/>
    <lineage>
        <taxon>Eukaryota</taxon>
        <taxon>Metazoa</taxon>
        <taxon>Chordata</taxon>
        <taxon>Craniata</taxon>
        <taxon>Vertebrata</taxon>
        <taxon>Euteleostomi</taxon>
        <taxon>Mammalia</taxon>
        <taxon>Eutheria</taxon>
        <taxon>Euarchontoglires</taxon>
        <taxon>Primates</taxon>
        <taxon>Haplorrhini</taxon>
        <taxon>Catarrhini</taxon>
        <taxon>Hominidae</taxon>
        <taxon>Pan</taxon>
    </lineage>
</organism>
<comment type="function">
    <text evidence="1">Triosephosphate isomerase is an extremely efficient metabolic enzyme that catalyzes the interconversion between dihydroxyacetone phosphate (DHAP) and D-glyceraldehyde-3-phosphate (G3P) in glycolysis and gluconeogenesis.</text>
</comment>
<comment type="function">
    <text evidence="1">It is also responsible for the non-negligible production of methylglyoxal a reactive cytotoxic side-product that modifies and can alter proteins, DNA and lipids.</text>
</comment>
<comment type="catalytic activity">
    <reaction evidence="1">
        <text>dihydroxyacetone phosphate = methylglyoxal + phosphate</text>
        <dbReference type="Rhea" id="RHEA:17937"/>
        <dbReference type="ChEBI" id="CHEBI:17158"/>
        <dbReference type="ChEBI" id="CHEBI:43474"/>
        <dbReference type="ChEBI" id="CHEBI:57642"/>
        <dbReference type="EC" id="4.2.3.3"/>
    </reaction>
</comment>
<comment type="catalytic activity">
    <reaction evidence="5">
        <text>D-glyceraldehyde 3-phosphate = dihydroxyacetone phosphate</text>
        <dbReference type="Rhea" id="RHEA:18585"/>
        <dbReference type="ChEBI" id="CHEBI:57642"/>
        <dbReference type="ChEBI" id="CHEBI:59776"/>
        <dbReference type="EC" id="5.3.1.1"/>
    </reaction>
</comment>
<comment type="pathway">
    <text evidence="5">Carbohydrate degradation; glycolysis; D-glyceraldehyde 3-phosphate from glycerone phosphate: step 1/1.</text>
</comment>
<comment type="pathway">
    <text evidence="5">Carbohydrate biosynthesis; gluconeogenesis.</text>
</comment>
<comment type="subunit">
    <text evidence="5">Homodimer.</text>
</comment>
<comment type="subcellular location">
    <subcellularLocation>
        <location evidence="5">Cytoplasm</location>
    </subcellularLocation>
</comment>
<comment type="similarity">
    <text evidence="6">Belongs to the triosephosphate isomerase family.</text>
</comment>
<reference key="1">
    <citation type="journal article" date="1991" name="Gene">
        <title>Characterization of the transcription unit and two processed pseudogenes of chimpanzee triosephosphate isomerase (TPI).</title>
        <authorList>
            <person name="Craig L.C."/>
            <person name="Pirtle I.L."/>
            <person name="Gracy R.W."/>
            <person name="Pirtle R.M."/>
        </authorList>
    </citation>
    <scope>NUCLEOTIDE SEQUENCE [GENOMIC DNA]</scope>
</reference>
<reference key="2">
    <citation type="journal article" date="2007" name="Gene">
        <title>Mapping of chimpanzee full-length cDNAs onto the human genome unveils large potential divergence of the transcriptome.</title>
        <authorList>
            <person name="Sakate R."/>
            <person name="Suto Y."/>
            <person name="Imanishi T."/>
            <person name="Tanoue T."/>
            <person name="Hida M."/>
            <person name="Hayasaka I."/>
            <person name="Kusuda J."/>
            <person name="Gojobori T."/>
            <person name="Hashimoto K."/>
            <person name="Hirai M."/>
        </authorList>
    </citation>
    <scope>NUCLEOTIDE SEQUENCE [MRNA]</scope>
    <source>
        <tissue>Brain</tissue>
    </source>
</reference>
<dbReference type="EC" id="5.3.1.1" evidence="5"/>
<dbReference type="EC" id="4.2.3.3" evidence="1"/>
<dbReference type="EMBL" id="M57946">
    <property type="protein sequence ID" value="AAA35438.1"/>
    <property type="molecule type" value="Genomic_DNA"/>
</dbReference>
<dbReference type="EMBL" id="AB222117">
    <property type="protein sequence ID" value="BAF62362.1"/>
    <property type="molecule type" value="mRNA"/>
</dbReference>
<dbReference type="PIR" id="JH0375">
    <property type="entry name" value="ISCZT1"/>
</dbReference>
<dbReference type="RefSeq" id="NP_001065250.1">
    <property type="nucleotide sequence ID" value="NM_001071782.1"/>
</dbReference>
<dbReference type="SMR" id="P60175"/>
<dbReference type="FunCoup" id="P60175">
    <property type="interactions" value="1446"/>
</dbReference>
<dbReference type="STRING" id="9598.ENSPTRP00000057240"/>
<dbReference type="PaxDb" id="9598-ENSPTRP00000057240"/>
<dbReference type="GeneID" id="451799"/>
<dbReference type="KEGG" id="ptr:451799"/>
<dbReference type="CTD" id="7167"/>
<dbReference type="eggNOG" id="KOG1643">
    <property type="taxonomic scope" value="Eukaryota"/>
</dbReference>
<dbReference type="HOGENOM" id="CLU_024251_2_0_1"/>
<dbReference type="InParanoid" id="P60175"/>
<dbReference type="OrthoDB" id="5346at9604"/>
<dbReference type="TreeFam" id="TF300829"/>
<dbReference type="UniPathway" id="UPA00109">
    <property type="reaction ID" value="UER00189"/>
</dbReference>
<dbReference type="UniPathway" id="UPA00138"/>
<dbReference type="Proteomes" id="UP000002277">
    <property type="component" value="Unplaced"/>
</dbReference>
<dbReference type="GO" id="GO:0005829">
    <property type="term" value="C:cytosol"/>
    <property type="evidence" value="ECO:0000318"/>
    <property type="project" value="GO_Central"/>
</dbReference>
<dbReference type="GO" id="GO:0008929">
    <property type="term" value="F:methylglyoxal synthase activity"/>
    <property type="evidence" value="ECO:0000250"/>
    <property type="project" value="UniProtKB"/>
</dbReference>
<dbReference type="GO" id="GO:0042803">
    <property type="term" value="F:protein homodimerization activity"/>
    <property type="evidence" value="ECO:0000250"/>
    <property type="project" value="UniProtKB"/>
</dbReference>
<dbReference type="GO" id="GO:0004807">
    <property type="term" value="F:triose-phosphate isomerase activity"/>
    <property type="evidence" value="ECO:0000250"/>
    <property type="project" value="UniProtKB"/>
</dbReference>
<dbReference type="GO" id="GO:0006094">
    <property type="term" value="P:gluconeogenesis"/>
    <property type="evidence" value="ECO:0000318"/>
    <property type="project" value="GO_Central"/>
</dbReference>
<dbReference type="GO" id="GO:0046166">
    <property type="term" value="P:glyceraldehyde-3-phosphate biosynthetic process"/>
    <property type="evidence" value="ECO:0000250"/>
    <property type="project" value="UniProtKB"/>
</dbReference>
<dbReference type="GO" id="GO:0019563">
    <property type="term" value="P:glycerol catabolic process"/>
    <property type="evidence" value="ECO:0000318"/>
    <property type="project" value="GO_Central"/>
</dbReference>
<dbReference type="GO" id="GO:0006096">
    <property type="term" value="P:glycolytic process"/>
    <property type="evidence" value="ECO:0000318"/>
    <property type="project" value="GO_Central"/>
</dbReference>
<dbReference type="GO" id="GO:0019242">
    <property type="term" value="P:methylglyoxal biosynthetic process"/>
    <property type="evidence" value="ECO:0000250"/>
    <property type="project" value="UniProtKB"/>
</dbReference>
<dbReference type="CDD" id="cd00311">
    <property type="entry name" value="TIM"/>
    <property type="match status" value="1"/>
</dbReference>
<dbReference type="FunFam" id="3.20.20.70:FF:000025">
    <property type="entry name" value="Triosephosphate isomerase"/>
    <property type="match status" value="1"/>
</dbReference>
<dbReference type="Gene3D" id="3.20.20.70">
    <property type="entry name" value="Aldolase class I"/>
    <property type="match status" value="1"/>
</dbReference>
<dbReference type="HAMAP" id="MF_00147_B">
    <property type="entry name" value="TIM_B"/>
    <property type="match status" value="1"/>
</dbReference>
<dbReference type="InterPro" id="IPR013785">
    <property type="entry name" value="Aldolase_TIM"/>
</dbReference>
<dbReference type="InterPro" id="IPR035990">
    <property type="entry name" value="TIM_sf"/>
</dbReference>
<dbReference type="InterPro" id="IPR022896">
    <property type="entry name" value="TrioseP_Isoase_bac/euk"/>
</dbReference>
<dbReference type="InterPro" id="IPR000652">
    <property type="entry name" value="Triosephosphate_isomerase"/>
</dbReference>
<dbReference type="InterPro" id="IPR020861">
    <property type="entry name" value="Triosephosphate_isomerase_AS"/>
</dbReference>
<dbReference type="NCBIfam" id="TIGR00419">
    <property type="entry name" value="tim"/>
    <property type="match status" value="1"/>
</dbReference>
<dbReference type="PANTHER" id="PTHR21139">
    <property type="entry name" value="TRIOSEPHOSPHATE ISOMERASE"/>
    <property type="match status" value="1"/>
</dbReference>
<dbReference type="PANTHER" id="PTHR21139:SF2">
    <property type="entry name" value="TRIOSEPHOSPHATE ISOMERASE"/>
    <property type="match status" value="1"/>
</dbReference>
<dbReference type="Pfam" id="PF00121">
    <property type="entry name" value="TIM"/>
    <property type="match status" value="1"/>
</dbReference>
<dbReference type="SUPFAM" id="SSF51351">
    <property type="entry name" value="Triosephosphate isomerase (TIM)"/>
    <property type="match status" value="1"/>
</dbReference>
<dbReference type="PROSITE" id="PS00171">
    <property type="entry name" value="TIM_1"/>
    <property type="match status" value="1"/>
</dbReference>
<dbReference type="PROSITE" id="PS51440">
    <property type="entry name" value="TIM_2"/>
    <property type="match status" value="1"/>
</dbReference>
<name>TPIS_PANTR</name>
<proteinExistence type="evidence at transcript level"/>
<accession>P60175</accession>
<accession>A5A6I9</accession>
<accession>P00938</accession>
<gene>
    <name type="primary">TPI1</name>
    <name type="synonym">TPI</name>
</gene>
<keyword id="KW-0007">Acetylation</keyword>
<keyword id="KW-0963">Cytoplasm</keyword>
<keyword id="KW-0312">Gluconeogenesis</keyword>
<keyword id="KW-0324">Glycolysis</keyword>
<keyword id="KW-0413">Isomerase</keyword>
<keyword id="KW-1017">Isopeptide bond</keyword>
<keyword id="KW-0456">Lyase</keyword>
<keyword id="KW-0488">Methylation</keyword>
<keyword id="KW-0944">Nitration</keyword>
<keyword id="KW-0597">Phosphoprotein</keyword>
<keyword id="KW-1185">Reference proteome</keyword>
<keyword id="KW-0832">Ubl conjugation</keyword>
<evidence type="ECO:0000250" key="1">
    <source>
        <dbReference type="UniProtKB" id="P00939"/>
    </source>
</evidence>
<evidence type="ECO:0000250" key="2">
    <source>
        <dbReference type="UniProtKB" id="P17751"/>
    </source>
</evidence>
<evidence type="ECO:0000250" key="3">
    <source>
        <dbReference type="UniProtKB" id="P48500"/>
    </source>
</evidence>
<evidence type="ECO:0000250" key="4">
    <source>
        <dbReference type="UniProtKB" id="P60174"/>
    </source>
</evidence>
<evidence type="ECO:0000255" key="5">
    <source>
        <dbReference type="PROSITE-ProRule" id="PRU10127"/>
    </source>
</evidence>
<evidence type="ECO:0000305" key="6"/>
<feature type="initiator methionine" description="Removed" evidence="4">
    <location>
        <position position="1"/>
    </location>
</feature>
<feature type="chain" id="PRO_0000090117" description="Triosephosphate isomerase">
    <location>
        <begin position="2"/>
        <end position="249"/>
    </location>
</feature>
<feature type="active site" description="Electrophile" evidence="5">
    <location>
        <position position="96"/>
    </location>
</feature>
<feature type="active site" description="Proton acceptor" evidence="5">
    <location>
        <position position="166"/>
    </location>
</feature>
<feature type="binding site" evidence="5">
    <location>
        <position position="12"/>
    </location>
    <ligand>
        <name>substrate</name>
    </ligand>
</feature>
<feature type="binding site" evidence="5">
    <location>
        <position position="14"/>
    </location>
    <ligand>
        <name>substrate</name>
    </ligand>
</feature>
<feature type="modified residue" description="N6-acetyllysine" evidence="4">
    <location>
        <position position="14"/>
    </location>
</feature>
<feature type="modified residue" description="3'-nitrotyrosine" evidence="2">
    <location>
        <position position="68"/>
    </location>
</feature>
<feature type="modified residue" description="Phosphoserine" evidence="4">
    <location>
        <position position="80"/>
    </location>
</feature>
<feature type="modified residue" description="Phosphoserine" evidence="3">
    <location>
        <position position="106"/>
    </location>
</feature>
<feature type="modified residue" description="N6-succinyllysine" evidence="2">
    <location>
        <position position="149"/>
    </location>
</feature>
<feature type="modified residue" description="N6-acetyllysine; alternate" evidence="2">
    <location>
        <position position="156"/>
    </location>
</feature>
<feature type="modified residue" description="N6-succinyllysine; alternate" evidence="2">
    <location>
        <position position="156"/>
    </location>
</feature>
<feature type="modified residue" description="Phosphoserine" evidence="2">
    <location>
        <position position="159"/>
    </location>
</feature>
<feature type="modified residue" description="Phosphothreonine" evidence="2">
    <location>
        <position position="173"/>
    </location>
</feature>
<feature type="modified residue" description="N6-acetyllysine; alternate" evidence="4">
    <location>
        <position position="194"/>
    </location>
</feature>
<feature type="modified residue" description="N6-methyllysine; alternate" evidence="4">
    <location>
        <position position="194"/>
    </location>
</feature>
<feature type="modified residue" description="N6-succinyllysine; alternate" evidence="2">
    <location>
        <position position="194"/>
    </location>
</feature>
<feature type="modified residue" description="Phosphoserine" evidence="3">
    <location>
        <position position="198"/>
    </location>
</feature>
<feature type="modified residue" description="3'-nitrotyrosine" evidence="2">
    <location>
        <position position="209"/>
    </location>
</feature>
<feature type="modified residue" description="Phosphoserine" evidence="4">
    <location>
        <position position="212"/>
    </location>
</feature>
<feature type="modified residue" description="Phosphothreonine" evidence="4">
    <location>
        <position position="214"/>
    </location>
</feature>
<feature type="modified residue" description="Phosphoserine" evidence="4">
    <location>
        <position position="223"/>
    </location>
</feature>
<feature type="modified residue" description="N6-acetyllysine" evidence="4">
    <location>
        <position position="238"/>
    </location>
</feature>
<feature type="cross-link" description="Glycyl lysine isopeptide (Lys-Gly) (interchain with G-Cter in SUMO1)" evidence="4">
    <location>
        <position position="142"/>
    </location>
</feature>
<feature type="sequence conflict" description="In Ref. 2; BAF62362." evidence="6" ref="2">
    <original>F</original>
    <variation>S</variation>
    <location>
        <position position="145"/>
    </location>
</feature>
<protein>
    <recommendedName>
        <fullName>Triosephosphate isomerase</fullName>
        <shortName>TIM</shortName>
        <ecNumber evidence="5">5.3.1.1</ecNumber>
    </recommendedName>
    <alternativeName>
        <fullName evidence="1">Methylglyoxal synthase</fullName>
        <ecNumber evidence="1">4.2.3.3</ecNumber>
    </alternativeName>
    <alternativeName>
        <fullName>Triose-phosphate isomerase</fullName>
    </alternativeName>
</protein>
<sequence>MAPSRKFFVGGNWKMNGRKQSLGELIGTLNAAKVPADTEVVCAPPTAYIDFARQKLDPKIAVAAQNCYKVTNGAFTGEISPGMIKDCGATWVVLGHSERRHVFGESDELIGQKVAHALAEGLGVIACIGEKLDEREAGITEKVVFEQTKVIADNVKDWSKVVLAYEPVWAIGTGKTATPQQAQEVHEKLRGWLKSNVSDAVAQSTRIIYGGSVTGATCKELASQPDVDGFLVGGASLKPEFVDIINAKQ</sequence>